<name>EFG_CHLT3</name>
<evidence type="ECO:0000255" key="1">
    <source>
        <dbReference type="HAMAP-Rule" id="MF_00054"/>
    </source>
</evidence>
<keyword id="KW-0963">Cytoplasm</keyword>
<keyword id="KW-0251">Elongation factor</keyword>
<keyword id="KW-0342">GTP-binding</keyword>
<keyword id="KW-0547">Nucleotide-binding</keyword>
<keyword id="KW-0648">Protein biosynthesis</keyword>
<keyword id="KW-1185">Reference proteome</keyword>
<reference key="1">
    <citation type="submission" date="2008-06" db="EMBL/GenBank/DDBJ databases">
        <title>Complete sequence of Chloroherpeton thalassium ATCC 35110.</title>
        <authorList>
            <consortium name="US DOE Joint Genome Institute"/>
            <person name="Lucas S."/>
            <person name="Copeland A."/>
            <person name="Lapidus A."/>
            <person name="Glavina del Rio T."/>
            <person name="Dalin E."/>
            <person name="Tice H."/>
            <person name="Bruce D."/>
            <person name="Goodwin L."/>
            <person name="Pitluck S."/>
            <person name="Schmutz J."/>
            <person name="Larimer F."/>
            <person name="Land M."/>
            <person name="Hauser L."/>
            <person name="Kyrpides N."/>
            <person name="Mikhailova N."/>
            <person name="Liu Z."/>
            <person name="Li T."/>
            <person name="Zhao F."/>
            <person name="Overmann J."/>
            <person name="Bryant D.A."/>
            <person name="Richardson P."/>
        </authorList>
    </citation>
    <scope>NUCLEOTIDE SEQUENCE [LARGE SCALE GENOMIC DNA]</scope>
    <source>
        <strain>ATCC 35110 / GB-78</strain>
    </source>
</reference>
<feature type="chain" id="PRO_1000091699" description="Elongation factor G">
    <location>
        <begin position="1"/>
        <end position="705"/>
    </location>
</feature>
<feature type="domain" description="tr-type G">
    <location>
        <begin position="8"/>
        <end position="291"/>
    </location>
</feature>
<feature type="binding site" evidence="1">
    <location>
        <begin position="17"/>
        <end position="24"/>
    </location>
    <ligand>
        <name>GTP</name>
        <dbReference type="ChEBI" id="CHEBI:37565"/>
    </ligand>
</feature>
<feature type="binding site" evidence="1">
    <location>
        <begin position="90"/>
        <end position="94"/>
    </location>
    <ligand>
        <name>GTP</name>
        <dbReference type="ChEBI" id="CHEBI:37565"/>
    </ligand>
</feature>
<feature type="binding site" evidence="1">
    <location>
        <begin position="144"/>
        <end position="147"/>
    </location>
    <ligand>
        <name>GTP</name>
        <dbReference type="ChEBI" id="CHEBI:37565"/>
    </ligand>
</feature>
<dbReference type="EMBL" id="CP001100">
    <property type="protein sequence ID" value="ACF13549.1"/>
    <property type="molecule type" value="Genomic_DNA"/>
</dbReference>
<dbReference type="RefSeq" id="WP_012499633.1">
    <property type="nucleotide sequence ID" value="NC_011026.1"/>
</dbReference>
<dbReference type="SMR" id="B3QY21"/>
<dbReference type="STRING" id="517418.Ctha_1085"/>
<dbReference type="KEGG" id="cts:Ctha_1085"/>
<dbReference type="eggNOG" id="COG0480">
    <property type="taxonomic scope" value="Bacteria"/>
</dbReference>
<dbReference type="HOGENOM" id="CLU_002794_4_1_10"/>
<dbReference type="OrthoDB" id="9801591at2"/>
<dbReference type="Proteomes" id="UP000001208">
    <property type="component" value="Chromosome"/>
</dbReference>
<dbReference type="GO" id="GO:0005737">
    <property type="term" value="C:cytoplasm"/>
    <property type="evidence" value="ECO:0007669"/>
    <property type="project" value="UniProtKB-SubCell"/>
</dbReference>
<dbReference type="GO" id="GO:0005525">
    <property type="term" value="F:GTP binding"/>
    <property type="evidence" value="ECO:0007669"/>
    <property type="project" value="UniProtKB-UniRule"/>
</dbReference>
<dbReference type="GO" id="GO:0003924">
    <property type="term" value="F:GTPase activity"/>
    <property type="evidence" value="ECO:0007669"/>
    <property type="project" value="InterPro"/>
</dbReference>
<dbReference type="GO" id="GO:0003746">
    <property type="term" value="F:translation elongation factor activity"/>
    <property type="evidence" value="ECO:0007669"/>
    <property type="project" value="UniProtKB-UniRule"/>
</dbReference>
<dbReference type="GO" id="GO:0032790">
    <property type="term" value="P:ribosome disassembly"/>
    <property type="evidence" value="ECO:0007669"/>
    <property type="project" value="TreeGrafter"/>
</dbReference>
<dbReference type="CDD" id="cd01886">
    <property type="entry name" value="EF-G"/>
    <property type="match status" value="1"/>
</dbReference>
<dbReference type="CDD" id="cd16262">
    <property type="entry name" value="EFG_III"/>
    <property type="match status" value="1"/>
</dbReference>
<dbReference type="CDD" id="cd01434">
    <property type="entry name" value="EFG_mtEFG1_IV"/>
    <property type="match status" value="1"/>
</dbReference>
<dbReference type="CDD" id="cd03713">
    <property type="entry name" value="EFG_mtEFG_C"/>
    <property type="match status" value="1"/>
</dbReference>
<dbReference type="CDD" id="cd04088">
    <property type="entry name" value="EFG_mtEFG_II"/>
    <property type="match status" value="1"/>
</dbReference>
<dbReference type="FunFam" id="2.40.30.10:FF:000006">
    <property type="entry name" value="Elongation factor G"/>
    <property type="match status" value="1"/>
</dbReference>
<dbReference type="FunFam" id="3.30.230.10:FF:000003">
    <property type="entry name" value="Elongation factor G"/>
    <property type="match status" value="1"/>
</dbReference>
<dbReference type="FunFam" id="3.30.70.240:FF:000001">
    <property type="entry name" value="Elongation factor G"/>
    <property type="match status" value="1"/>
</dbReference>
<dbReference type="FunFam" id="3.30.70.870:FF:000001">
    <property type="entry name" value="Elongation factor G"/>
    <property type="match status" value="1"/>
</dbReference>
<dbReference type="FunFam" id="3.40.50.300:FF:000029">
    <property type="entry name" value="Elongation factor G"/>
    <property type="match status" value="1"/>
</dbReference>
<dbReference type="Gene3D" id="3.30.230.10">
    <property type="match status" value="1"/>
</dbReference>
<dbReference type="Gene3D" id="3.30.70.240">
    <property type="match status" value="1"/>
</dbReference>
<dbReference type="Gene3D" id="3.30.70.870">
    <property type="entry name" value="Elongation Factor G (Translational Gtpase), domain 3"/>
    <property type="match status" value="1"/>
</dbReference>
<dbReference type="Gene3D" id="3.40.50.300">
    <property type="entry name" value="P-loop containing nucleotide triphosphate hydrolases"/>
    <property type="match status" value="1"/>
</dbReference>
<dbReference type="Gene3D" id="2.40.30.10">
    <property type="entry name" value="Translation factors"/>
    <property type="match status" value="1"/>
</dbReference>
<dbReference type="HAMAP" id="MF_00054_B">
    <property type="entry name" value="EF_G_EF_2_B"/>
    <property type="match status" value="1"/>
</dbReference>
<dbReference type="InterPro" id="IPR041095">
    <property type="entry name" value="EFG_II"/>
</dbReference>
<dbReference type="InterPro" id="IPR009022">
    <property type="entry name" value="EFG_III"/>
</dbReference>
<dbReference type="InterPro" id="IPR035647">
    <property type="entry name" value="EFG_III/V"/>
</dbReference>
<dbReference type="InterPro" id="IPR047872">
    <property type="entry name" value="EFG_IV"/>
</dbReference>
<dbReference type="InterPro" id="IPR035649">
    <property type="entry name" value="EFG_V"/>
</dbReference>
<dbReference type="InterPro" id="IPR000640">
    <property type="entry name" value="EFG_V-like"/>
</dbReference>
<dbReference type="InterPro" id="IPR004161">
    <property type="entry name" value="EFTu-like_2"/>
</dbReference>
<dbReference type="InterPro" id="IPR031157">
    <property type="entry name" value="G_TR_CS"/>
</dbReference>
<dbReference type="InterPro" id="IPR027417">
    <property type="entry name" value="P-loop_NTPase"/>
</dbReference>
<dbReference type="InterPro" id="IPR020568">
    <property type="entry name" value="Ribosomal_Su5_D2-typ_SF"/>
</dbReference>
<dbReference type="InterPro" id="IPR014721">
    <property type="entry name" value="Ribsml_uS5_D2-typ_fold_subgr"/>
</dbReference>
<dbReference type="InterPro" id="IPR005225">
    <property type="entry name" value="Small_GTP-bd"/>
</dbReference>
<dbReference type="InterPro" id="IPR000795">
    <property type="entry name" value="T_Tr_GTP-bd_dom"/>
</dbReference>
<dbReference type="InterPro" id="IPR009000">
    <property type="entry name" value="Transl_B-barrel_sf"/>
</dbReference>
<dbReference type="InterPro" id="IPR004540">
    <property type="entry name" value="Transl_elong_EFG/EF2"/>
</dbReference>
<dbReference type="InterPro" id="IPR005517">
    <property type="entry name" value="Transl_elong_EFG/EF2_IV"/>
</dbReference>
<dbReference type="NCBIfam" id="TIGR00484">
    <property type="entry name" value="EF-G"/>
    <property type="match status" value="1"/>
</dbReference>
<dbReference type="NCBIfam" id="NF009379">
    <property type="entry name" value="PRK12740.1-3"/>
    <property type="match status" value="1"/>
</dbReference>
<dbReference type="NCBIfam" id="NF009381">
    <property type="entry name" value="PRK12740.1-5"/>
    <property type="match status" value="1"/>
</dbReference>
<dbReference type="NCBIfam" id="TIGR00231">
    <property type="entry name" value="small_GTP"/>
    <property type="match status" value="1"/>
</dbReference>
<dbReference type="PANTHER" id="PTHR43261:SF1">
    <property type="entry name" value="RIBOSOME-RELEASING FACTOR 2, MITOCHONDRIAL"/>
    <property type="match status" value="1"/>
</dbReference>
<dbReference type="PANTHER" id="PTHR43261">
    <property type="entry name" value="TRANSLATION ELONGATION FACTOR G-RELATED"/>
    <property type="match status" value="1"/>
</dbReference>
<dbReference type="Pfam" id="PF00679">
    <property type="entry name" value="EFG_C"/>
    <property type="match status" value="1"/>
</dbReference>
<dbReference type="Pfam" id="PF14492">
    <property type="entry name" value="EFG_III"/>
    <property type="match status" value="1"/>
</dbReference>
<dbReference type="Pfam" id="PF03764">
    <property type="entry name" value="EFG_IV"/>
    <property type="match status" value="1"/>
</dbReference>
<dbReference type="Pfam" id="PF00009">
    <property type="entry name" value="GTP_EFTU"/>
    <property type="match status" value="1"/>
</dbReference>
<dbReference type="Pfam" id="PF03144">
    <property type="entry name" value="GTP_EFTU_D2"/>
    <property type="match status" value="1"/>
</dbReference>
<dbReference type="PRINTS" id="PR00315">
    <property type="entry name" value="ELONGATNFCT"/>
</dbReference>
<dbReference type="SMART" id="SM00838">
    <property type="entry name" value="EFG_C"/>
    <property type="match status" value="1"/>
</dbReference>
<dbReference type="SMART" id="SM00889">
    <property type="entry name" value="EFG_IV"/>
    <property type="match status" value="1"/>
</dbReference>
<dbReference type="SUPFAM" id="SSF54980">
    <property type="entry name" value="EF-G C-terminal domain-like"/>
    <property type="match status" value="2"/>
</dbReference>
<dbReference type="SUPFAM" id="SSF52540">
    <property type="entry name" value="P-loop containing nucleoside triphosphate hydrolases"/>
    <property type="match status" value="1"/>
</dbReference>
<dbReference type="SUPFAM" id="SSF54211">
    <property type="entry name" value="Ribosomal protein S5 domain 2-like"/>
    <property type="match status" value="1"/>
</dbReference>
<dbReference type="SUPFAM" id="SSF50447">
    <property type="entry name" value="Translation proteins"/>
    <property type="match status" value="1"/>
</dbReference>
<dbReference type="PROSITE" id="PS00301">
    <property type="entry name" value="G_TR_1"/>
    <property type="match status" value="1"/>
</dbReference>
<dbReference type="PROSITE" id="PS51722">
    <property type="entry name" value="G_TR_2"/>
    <property type="match status" value="1"/>
</dbReference>
<accession>B3QY21</accession>
<organism>
    <name type="scientific">Chloroherpeton thalassium (strain ATCC 35110 / GB-78)</name>
    <dbReference type="NCBI Taxonomy" id="517418"/>
    <lineage>
        <taxon>Bacteria</taxon>
        <taxon>Pseudomonadati</taxon>
        <taxon>Chlorobiota</taxon>
        <taxon>Chlorobiia</taxon>
        <taxon>Chlorobiales</taxon>
        <taxon>Chloroherpetonaceae</taxon>
        <taxon>Chloroherpeton</taxon>
    </lineage>
</organism>
<sequence length="705" mass="78168">MPRQIPLEKVRNIGIMAHIDAGKTTTTERILYYTGRVHRLGEVHDGAATMDWMEQEKERGITITSAATTCFWQPRYGLLKDVRHRVNIIDTPGHVDFTVEVERSLRVLDGAVAVFCAVGGVEPQSETVWRQANKYKVPRIGYVNKMDRVGADFFNVVEMIKERLKANPVPIQIPIGQGEMFAGFIDLIRMKGIIYDKEDGTTYQEVEIPHDLENQAKTWRVNMLEAVSDIDDSLLEKYLNGEEITEEEVRRTLRVATLKTEIIPVLCGSSFKNKGVQFMLDAVVEYLPSPIDVGAVTGHSPRDEDEKIARQPDDSAPFAGLAFKITSDPYVGKLTFFRVYSGVLKSGSYVLNSITGKKERIGRLLQMHANHREDLDEVFAGDIAAAVGLKDTKTGDTLCDESKSIVLEKMVFPEPVIQIAIEPKTKADSDKLGMSLAKLAEEDPTFKVSMNEDTNQTLIAGMGELHLEIIVDRLKREFKVDANVGKPQVSYKETIRKKVEAEGKFVRQSGGKGQFGLVNIIVEPSEKDKGFEFVNEIKGGSIPKEYIPAVSQGIQEAMRNGIVAGYPMIDVKVTLFDGKYHEVDSSEMAFKIAGSIGFKEGARKAGAVLLEPIMAVEVITPEEYMGDVMGDLSGRRGHIEGMHQRAGAQVIKAKVPLSAMFGYSTELRSMTQGRANYSMEFHDYSEVPASIANEIVEKSSGKVTA</sequence>
<comment type="function">
    <text evidence="1">Catalyzes the GTP-dependent ribosomal translocation step during translation elongation. During this step, the ribosome changes from the pre-translocational (PRE) to the post-translocational (POST) state as the newly formed A-site-bound peptidyl-tRNA and P-site-bound deacylated tRNA move to the P and E sites, respectively. Catalyzes the coordinated movement of the two tRNA molecules, the mRNA and conformational changes in the ribosome.</text>
</comment>
<comment type="subcellular location">
    <subcellularLocation>
        <location evidence="1">Cytoplasm</location>
    </subcellularLocation>
</comment>
<comment type="similarity">
    <text evidence="1">Belongs to the TRAFAC class translation factor GTPase superfamily. Classic translation factor GTPase family. EF-G/EF-2 subfamily.</text>
</comment>
<proteinExistence type="inferred from homology"/>
<gene>
    <name evidence="1" type="primary">fusA</name>
    <name type="ordered locus">Ctha_1085</name>
</gene>
<protein>
    <recommendedName>
        <fullName evidence="1">Elongation factor G</fullName>
        <shortName evidence="1">EF-G</shortName>
    </recommendedName>
</protein>